<proteinExistence type="inferred from homology"/>
<comment type="function">
    <text evidence="1">Quinone reductase that provides resistance to thiol-specific stress caused by electrophilic quinones.</text>
</comment>
<comment type="function">
    <text evidence="1">Also exhibits azoreductase activity. Catalyzes the reductive cleavage of the azo bond in aromatic azo compounds to the corresponding amines.</text>
</comment>
<comment type="catalytic activity">
    <reaction evidence="1">
        <text>2 a quinone + NADH + H(+) = 2 a 1,4-benzosemiquinone + NAD(+)</text>
        <dbReference type="Rhea" id="RHEA:65952"/>
        <dbReference type="ChEBI" id="CHEBI:15378"/>
        <dbReference type="ChEBI" id="CHEBI:57540"/>
        <dbReference type="ChEBI" id="CHEBI:57945"/>
        <dbReference type="ChEBI" id="CHEBI:132124"/>
        <dbReference type="ChEBI" id="CHEBI:134225"/>
    </reaction>
</comment>
<comment type="catalytic activity">
    <reaction evidence="1">
        <text>N,N-dimethyl-1,4-phenylenediamine + anthranilate + 2 NAD(+) = 2-(4-dimethylaminophenyl)diazenylbenzoate + 2 NADH + 2 H(+)</text>
        <dbReference type="Rhea" id="RHEA:55872"/>
        <dbReference type="ChEBI" id="CHEBI:15378"/>
        <dbReference type="ChEBI" id="CHEBI:15783"/>
        <dbReference type="ChEBI" id="CHEBI:16567"/>
        <dbReference type="ChEBI" id="CHEBI:57540"/>
        <dbReference type="ChEBI" id="CHEBI:57945"/>
        <dbReference type="ChEBI" id="CHEBI:71579"/>
        <dbReference type="EC" id="1.7.1.17"/>
    </reaction>
</comment>
<comment type="cofactor">
    <cofactor evidence="1">
        <name>FMN</name>
        <dbReference type="ChEBI" id="CHEBI:58210"/>
    </cofactor>
    <text evidence="1">Binds 1 FMN per subunit.</text>
</comment>
<comment type="subunit">
    <text evidence="1">Homodimer.</text>
</comment>
<comment type="similarity">
    <text evidence="1">Belongs to the azoreductase type 1 family.</text>
</comment>
<name>AZOR_METEP</name>
<gene>
    <name evidence="1" type="primary">azoR</name>
    <name type="ordered locus">Mext_2035</name>
</gene>
<keyword id="KW-0285">Flavoprotein</keyword>
<keyword id="KW-0288">FMN</keyword>
<keyword id="KW-0520">NAD</keyword>
<keyword id="KW-0560">Oxidoreductase</keyword>
<dbReference type="EC" id="1.6.5.-" evidence="1"/>
<dbReference type="EC" id="1.7.1.17" evidence="1"/>
<dbReference type="EMBL" id="CP000908">
    <property type="protein sequence ID" value="ABY30431.1"/>
    <property type="molecule type" value="Genomic_DNA"/>
</dbReference>
<dbReference type="RefSeq" id="WP_012253556.1">
    <property type="nucleotide sequence ID" value="NC_010172.1"/>
</dbReference>
<dbReference type="SMR" id="A9W4C5"/>
<dbReference type="KEGG" id="mex:Mext_2035"/>
<dbReference type="eggNOG" id="COG1182">
    <property type="taxonomic scope" value="Bacteria"/>
</dbReference>
<dbReference type="HOGENOM" id="CLU_088964_0_0_5"/>
<dbReference type="BioCyc" id="MEXT419610:MEXT_RS10280-MONOMER"/>
<dbReference type="GO" id="GO:0009055">
    <property type="term" value="F:electron transfer activity"/>
    <property type="evidence" value="ECO:0007669"/>
    <property type="project" value="UniProtKB-UniRule"/>
</dbReference>
<dbReference type="GO" id="GO:0010181">
    <property type="term" value="F:FMN binding"/>
    <property type="evidence" value="ECO:0007669"/>
    <property type="project" value="UniProtKB-UniRule"/>
</dbReference>
<dbReference type="GO" id="GO:0016652">
    <property type="term" value="F:oxidoreductase activity, acting on NAD(P)H as acceptor"/>
    <property type="evidence" value="ECO:0007669"/>
    <property type="project" value="UniProtKB-UniRule"/>
</dbReference>
<dbReference type="GO" id="GO:0016655">
    <property type="term" value="F:oxidoreductase activity, acting on NAD(P)H, quinone or similar compound as acceptor"/>
    <property type="evidence" value="ECO:0007669"/>
    <property type="project" value="InterPro"/>
</dbReference>
<dbReference type="Gene3D" id="3.40.50.360">
    <property type="match status" value="1"/>
</dbReference>
<dbReference type="HAMAP" id="MF_01216">
    <property type="entry name" value="Azoreductase_type1"/>
    <property type="match status" value="1"/>
</dbReference>
<dbReference type="InterPro" id="IPR003680">
    <property type="entry name" value="Flavodoxin_fold"/>
</dbReference>
<dbReference type="InterPro" id="IPR029039">
    <property type="entry name" value="Flavoprotein-like_sf"/>
</dbReference>
<dbReference type="InterPro" id="IPR050104">
    <property type="entry name" value="FMN-dep_NADH:Q_OxRdtase_AzoR1"/>
</dbReference>
<dbReference type="InterPro" id="IPR023048">
    <property type="entry name" value="NADH:quinone_OxRdtase_FMN_depd"/>
</dbReference>
<dbReference type="PANTHER" id="PTHR43741">
    <property type="entry name" value="FMN-DEPENDENT NADH-AZOREDUCTASE 1"/>
    <property type="match status" value="1"/>
</dbReference>
<dbReference type="PANTHER" id="PTHR43741:SF4">
    <property type="entry name" value="FMN-DEPENDENT NADH:QUINONE OXIDOREDUCTASE"/>
    <property type="match status" value="1"/>
</dbReference>
<dbReference type="Pfam" id="PF02525">
    <property type="entry name" value="Flavodoxin_2"/>
    <property type="match status" value="1"/>
</dbReference>
<dbReference type="SUPFAM" id="SSF52218">
    <property type="entry name" value="Flavoproteins"/>
    <property type="match status" value="1"/>
</dbReference>
<sequence>MKLLHVDGSILGPHSVSRTVSAAIVDRLRAQHPGLDVIYRDLAGTPLPHLSGAVLAGAQPNATNTPDVQHDVELGRQVLEEFLAAEIVVIGAPLYNFTLSSQLKAWIDRILVAGVTFRYGPSGAEGLAGGKRVIAVVSRGGLYGPGTPAAAAEHAETYLRTVLAFIGITAPEVIVAEGIALGPEARERALAGALDAAAALKAA</sequence>
<accession>A9W4C5</accession>
<protein>
    <recommendedName>
        <fullName evidence="1">FMN-dependent NADH:quinone oxidoreductase</fullName>
        <ecNumber evidence="1">1.6.5.-</ecNumber>
    </recommendedName>
    <alternativeName>
        <fullName evidence="1">Azo-dye reductase</fullName>
    </alternativeName>
    <alternativeName>
        <fullName evidence="1">FMN-dependent NADH-azo compound oxidoreductase</fullName>
    </alternativeName>
    <alternativeName>
        <fullName evidence="1">FMN-dependent NADH-azoreductase</fullName>
        <ecNumber evidence="1">1.7.1.17</ecNumber>
    </alternativeName>
</protein>
<organism>
    <name type="scientific">Methylorubrum extorquens (strain PA1)</name>
    <name type="common">Methylobacterium extorquens</name>
    <dbReference type="NCBI Taxonomy" id="419610"/>
    <lineage>
        <taxon>Bacteria</taxon>
        <taxon>Pseudomonadati</taxon>
        <taxon>Pseudomonadota</taxon>
        <taxon>Alphaproteobacteria</taxon>
        <taxon>Hyphomicrobiales</taxon>
        <taxon>Methylobacteriaceae</taxon>
        <taxon>Methylorubrum</taxon>
    </lineage>
</organism>
<reference key="1">
    <citation type="submission" date="2007-12" db="EMBL/GenBank/DDBJ databases">
        <title>Complete sequence of Methylobacterium extorquens PA1.</title>
        <authorList>
            <consortium name="US DOE Joint Genome Institute"/>
            <person name="Copeland A."/>
            <person name="Lucas S."/>
            <person name="Lapidus A."/>
            <person name="Barry K."/>
            <person name="Glavina del Rio T."/>
            <person name="Dalin E."/>
            <person name="Tice H."/>
            <person name="Pitluck S."/>
            <person name="Saunders E."/>
            <person name="Brettin T."/>
            <person name="Bruce D."/>
            <person name="Detter J.C."/>
            <person name="Han C."/>
            <person name="Schmutz J."/>
            <person name="Larimer F."/>
            <person name="Land M."/>
            <person name="Hauser L."/>
            <person name="Kyrpides N."/>
            <person name="Kim E."/>
            <person name="Marx C."/>
            <person name="Richardson P."/>
        </authorList>
    </citation>
    <scope>NUCLEOTIDE SEQUENCE [LARGE SCALE GENOMIC DNA]</scope>
    <source>
        <strain>PA1</strain>
    </source>
</reference>
<feature type="chain" id="PRO_1000138980" description="FMN-dependent NADH:quinone oxidoreductase">
    <location>
        <begin position="1"/>
        <end position="203"/>
    </location>
</feature>
<feature type="binding site" evidence="1">
    <location>
        <position position="9"/>
    </location>
    <ligand>
        <name>FMN</name>
        <dbReference type="ChEBI" id="CHEBI:58210"/>
    </ligand>
</feature>
<feature type="binding site" evidence="1">
    <location>
        <begin position="15"/>
        <end position="17"/>
    </location>
    <ligand>
        <name>FMN</name>
        <dbReference type="ChEBI" id="CHEBI:58210"/>
    </ligand>
</feature>
<feature type="binding site" evidence="1">
    <location>
        <begin position="138"/>
        <end position="141"/>
    </location>
    <ligand>
        <name>FMN</name>
        <dbReference type="ChEBI" id="CHEBI:58210"/>
    </ligand>
</feature>
<evidence type="ECO:0000255" key="1">
    <source>
        <dbReference type="HAMAP-Rule" id="MF_01216"/>
    </source>
</evidence>